<keyword id="KW-0067">ATP-binding</keyword>
<keyword id="KW-0143">Chaperone</keyword>
<keyword id="KW-0175">Coiled coil</keyword>
<keyword id="KW-0963">Cytoplasm</keyword>
<keyword id="KW-0547">Nucleotide-binding</keyword>
<keyword id="KW-0647">Proteasome</keyword>
<keyword id="KW-1185">Reference proteome</keyword>
<accession>Q9HRW6</accession>
<evidence type="ECO:0000255" key="1">
    <source>
        <dbReference type="HAMAP-Rule" id="MF_00553"/>
    </source>
</evidence>
<evidence type="ECO:0000256" key="2">
    <source>
        <dbReference type="SAM" id="MobiDB-lite"/>
    </source>
</evidence>
<evidence type="ECO:0000305" key="3"/>
<comment type="function">
    <text evidence="1">ATPase which is responsible for recognizing, binding, unfolding and translocation of substrate proteins into the archaeal 20S proteasome core particle. Is essential for opening the gate of the 20S proteasome via an interaction with its C-terminus, thereby allowing substrate entry and access to the site of proteolysis. Thus, the C-termini of the proteasomal ATPase function like a 'key in a lock' to induce gate opening and therefore regulate proteolysis. Unfolding activity requires energy from ATP hydrolysis, whereas ATP binding alone promotes ATPase-20S proteasome association which triggers gate opening, and supports translocation of unfolded substrates.</text>
</comment>
<comment type="subunit">
    <text evidence="1">Homohexamer. The hexameric complex has a two-ring architecture resembling a top hat that caps the 20S proteasome core at one or both ends. Upon ATP-binding, the C-terminus of PAN interacts with the alpha-rings of the proteasome core by binding to the intersubunit pockets.</text>
</comment>
<comment type="subcellular location">
    <subcellularLocation>
        <location evidence="1">Cytoplasm</location>
    </subcellularLocation>
</comment>
<comment type="domain">
    <text evidence="1">Consists of three main regions, an N-terminal coiled-coil domain that may assist in substrate recognition, an interdomain involved in PAN hexamerization, and a C-terminal ATPase domain of the AAA type.</text>
</comment>
<comment type="similarity">
    <text evidence="1">Belongs to the AAA ATPase family.</text>
</comment>
<comment type="sequence caution" evidence="3">
    <conflict type="erroneous initiation">
        <sequence resource="EMBL-CDS" id="AAG19042"/>
    </conflict>
    <text>Truncated N-terminus.</text>
</comment>
<dbReference type="EMBL" id="AE004437">
    <property type="protein sequence ID" value="AAG19042.1"/>
    <property type="status" value="ALT_INIT"/>
    <property type="molecule type" value="Genomic_DNA"/>
</dbReference>
<dbReference type="PIR" id="F84209">
    <property type="entry name" value="F84209"/>
</dbReference>
<dbReference type="RefSeq" id="WP_012289167.1">
    <property type="nucleotide sequence ID" value="NC_002607.1"/>
</dbReference>
<dbReference type="SMR" id="Q9HRW6"/>
<dbReference type="FunCoup" id="Q9HRW6">
    <property type="interactions" value="106"/>
</dbReference>
<dbReference type="STRING" id="64091.VNG_0510G"/>
<dbReference type="PaxDb" id="64091-VNG_0510G"/>
<dbReference type="KEGG" id="hal:VNG_0510G"/>
<dbReference type="PATRIC" id="fig|64091.14.peg.389"/>
<dbReference type="HOGENOM" id="CLU_000688_2_4_2"/>
<dbReference type="InParanoid" id="Q9HRW6"/>
<dbReference type="OrthoDB" id="77269at2157"/>
<dbReference type="PhylomeDB" id="Q9HRW6"/>
<dbReference type="Proteomes" id="UP000000554">
    <property type="component" value="Chromosome"/>
</dbReference>
<dbReference type="GO" id="GO:0005737">
    <property type="term" value="C:cytoplasm"/>
    <property type="evidence" value="ECO:0007669"/>
    <property type="project" value="UniProtKB-SubCell"/>
</dbReference>
<dbReference type="GO" id="GO:0008540">
    <property type="term" value="C:proteasome regulatory particle, base subcomplex"/>
    <property type="evidence" value="ECO:0000318"/>
    <property type="project" value="GO_Central"/>
</dbReference>
<dbReference type="GO" id="GO:0022623">
    <property type="term" value="C:proteasome-activating nucleotidase complex"/>
    <property type="evidence" value="ECO:0007669"/>
    <property type="project" value="UniProtKB-UniRule"/>
</dbReference>
<dbReference type="GO" id="GO:0005524">
    <property type="term" value="F:ATP binding"/>
    <property type="evidence" value="ECO:0007669"/>
    <property type="project" value="UniProtKB-UniRule"/>
</dbReference>
<dbReference type="GO" id="GO:0016887">
    <property type="term" value="F:ATP hydrolysis activity"/>
    <property type="evidence" value="ECO:0007669"/>
    <property type="project" value="UniProtKB-UniRule"/>
</dbReference>
<dbReference type="GO" id="GO:0036402">
    <property type="term" value="F:proteasome-activating activity"/>
    <property type="evidence" value="ECO:0000318"/>
    <property type="project" value="GO_Central"/>
</dbReference>
<dbReference type="GO" id="GO:0043161">
    <property type="term" value="P:proteasome-mediated ubiquitin-dependent protein catabolic process"/>
    <property type="evidence" value="ECO:0000318"/>
    <property type="project" value="GO_Central"/>
</dbReference>
<dbReference type="GO" id="GO:0043335">
    <property type="term" value="P:protein unfolding"/>
    <property type="evidence" value="ECO:0007669"/>
    <property type="project" value="UniProtKB-UniRule"/>
</dbReference>
<dbReference type="FunFam" id="3.40.50.300:FF:000033">
    <property type="entry name" value="26S protease regulatory subunit 6B"/>
    <property type="match status" value="1"/>
</dbReference>
<dbReference type="Gene3D" id="1.10.8.60">
    <property type="match status" value="1"/>
</dbReference>
<dbReference type="Gene3D" id="2.40.50.140">
    <property type="entry name" value="Nucleic acid-binding proteins"/>
    <property type="match status" value="1"/>
</dbReference>
<dbReference type="Gene3D" id="3.40.50.300">
    <property type="entry name" value="P-loop containing nucleotide triphosphate hydrolases"/>
    <property type="match status" value="1"/>
</dbReference>
<dbReference type="HAMAP" id="MF_00553">
    <property type="entry name" value="PAN"/>
    <property type="match status" value="1"/>
</dbReference>
<dbReference type="InterPro" id="IPR050221">
    <property type="entry name" value="26S_Proteasome_ATPase"/>
</dbReference>
<dbReference type="InterPro" id="IPR003593">
    <property type="entry name" value="AAA+_ATPase"/>
</dbReference>
<dbReference type="InterPro" id="IPR041569">
    <property type="entry name" value="AAA_lid_3"/>
</dbReference>
<dbReference type="InterPro" id="IPR003959">
    <property type="entry name" value="ATPase_AAA_core"/>
</dbReference>
<dbReference type="InterPro" id="IPR003960">
    <property type="entry name" value="ATPase_AAA_CS"/>
</dbReference>
<dbReference type="InterPro" id="IPR012340">
    <property type="entry name" value="NA-bd_OB-fold"/>
</dbReference>
<dbReference type="InterPro" id="IPR023501">
    <property type="entry name" value="Nucleotidase_PAN"/>
</dbReference>
<dbReference type="InterPro" id="IPR027417">
    <property type="entry name" value="P-loop_NTPase"/>
</dbReference>
<dbReference type="InterPro" id="IPR032501">
    <property type="entry name" value="Prot_ATP_ID_OB_2nd"/>
</dbReference>
<dbReference type="NCBIfam" id="NF003069">
    <property type="entry name" value="PRK03992.1"/>
    <property type="match status" value="1"/>
</dbReference>
<dbReference type="NCBIfam" id="NF047748">
    <property type="entry name" value="PrtsmActNtasePan1"/>
    <property type="match status" value="1"/>
</dbReference>
<dbReference type="PANTHER" id="PTHR23073">
    <property type="entry name" value="26S PROTEASOME REGULATORY SUBUNIT"/>
    <property type="match status" value="1"/>
</dbReference>
<dbReference type="Pfam" id="PF00004">
    <property type="entry name" value="AAA"/>
    <property type="match status" value="1"/>
</dbReference>
<dbReference type="Pfam" id="PF17862">
    <property type="entry name" value="AAA_lid_3"/>
    <property type="match status" value="1"/>
</dbReference>
<dbReference type="Pfam" id="PF16450">
    <property type="entry name" value="Prot_ATP_ID_OB_C"/>
    <property type="match status" value="1"/>
</dbReference>
<dbReference type="SMART" id="SM00382">
    <property type="entry name" value="AAA"/>
    <property type="match status" value="1"/>
</dbReference>
<dbReference type="SUPFAM" id="SSF52540">
    <property type="entry name" value="P-loop containing nucleoside triphosphate hydrolases"/>
    <property type="match status" value="1"/>
</dbReference>
<dbReference type="PROSITE" id="PS00674">
    <property type="entry name" value="AAA"/>
    <property type="match status" value="1"/>
</dbReference>
<proteinExistence type="inferred from homology"/>
<reference key="1">
    <citation type="journal article" date="2000" name="Proc. Natl. Acad. Sci. U.S.A.">
        <title>Genome sequence of Halobacterium species NRC-1.</title>
        <authorList>
            <person name="Ng W.V."/>
            <person name="Kennedy S.P."/>
            <person name="Mahairas G.G."/>
            <person name="Berquist B."/>
            <person name="Pan M."/>
            <person name="Shukla H.D."/>
            <person name="Lasky S.R."/>
            <person name="Baliga N.S."/>
            <person name="Thorsson V."/>
            <person name="Sbrogna J."/>
            <person name="Swartzell S."/>
            <person name="Weir D."/>
            <person name="Hall J."/>
            <person name="Dahl T.A."/>
            <person name="Welti R."/>
            <person name="Goo Y.A."/>
            <person name="Leithauser B."/>
            <person name="Keller K."/>
            <person name="Cruz R."/>
            <person name="Danson M.J."/>
            <person name="Hough D.W."/>
            <person name="Maddocks D.G."/>
            <person name="Jablonski P.E."/>
            <person name="Krebs M.P."/>
            <person name="Angevine C.M."/>
            <person name="Dale H."/>
            <person name="Isenbarger T.A."/>
            <person name="Peck R.F."/>
            <person name="Pohlschroder M."/>
            <person name="Spudich J.L."/>
            <person name="Jung K.-H."/>
            <person name="Alam M."/>
            <person name="Freitas T."/>
            <person name="Hou S."/>
            <person name="Daniels C.J."/>
            <person name="Dennis P.P."/>
            <person name="Omer A.D."/>
            <person name="Ebhardt H."/>
            <person name="Lowe T.M."/>
            <person name="Liang P."/>
            <person name="Riley M."/>
            <person name="Hood L."/>
            <person name="DasSarma S."/>
        </authorList>
    </citation>
    <scope>NUCLEOTIDE SEQUENCE [LARGE SCALE GENOMIC DNA]</scope>
    <source>
        <strain>ATCC 700922 / JCM 11081 / NRC-1</strain>
    </source>
</reference>
<organism>
    <name type="scientific">Halobacterium salinarum (strain ATCC 700922 / JCM 11081 / NRC-1)</name>
    <name type="common">Halobacterium halobium</name>
    <dbReference type="NCBI Taxonomy" id="64091"/>
    <lineage>
        <taxon>Archaea</taxon>
        <taxon>Methanobacteriati</taxon>
        <taxon>Methanobacteriota</taxon>
        <taxon>Stenosarchaea group</taxon>
        <taxon>Halobacteria</taxon>
        <taxon>Halobacteriales</taxon>
        <taxon>Halobacteriaceae</taxon>
        <taxon>Halobacterium</taxon>
        <taxon>Halobacterium salinarum NRC-34001</taxon>
    </lineage>
</organism>
<gene>
    <name evidence="1" type="primary">pan1</name>
    <name type="synonym">prrIV2</name>
    <name type="ordered locus">VNG_0510G</name>
</gene>
<sequence>MTDTVEDVELPYDDSASQQDKLEALEEQLSTLEEENEEMRDRLLDANAENNKYQQKLERLSHENKKLKQSPLFIATVQELTDEGAVIKQHGNNQEALTEVTDELRATLEPGSRVAVNNSLSVVRQLDDEADVRARVMEVDDSPDVGYEDIGGLDDQLREVRETVELPMKDPGLFETVGINPPSGVLLHGPPGTGKTLMAKAVASQTDASFIKMAGSELVHKFIGEGAKLVRDLFQVARDHEPAVVFIDEIDAIASKRTDSKTSGDAEVQRTMMQLLSEMDGFDERGDIRIIAATNRFDMLDRAILRPGRFDRLIEVPHPNVGGREKIFRIHTRAMNVADSVDFGELAADTGDLSGADVKAICTEAGMFAIRDDRTEVRMQDFQSAREKLDQDSEPAAATDVSRTFA</sequence>
<name>PAN1_HALSA</name>
<feature type="chain" id="PRO_0000084741" description="Proteasome-activating nucleotidase 1">
    <location>
        <begin position="1"/>
        <end position="406"/>
    </location>
</feature>
<feature type="region of interest" description="Disordered" evidence="2">
    <location>
        <begin position="1"/>
        <end position="20"/>
    </location>
</feature>
<feature type="region of interest" description="Disordered" evidence="2">
    <location>
        <begin position="385"/>
        <end position="406"/>
    </location>
</feature>
<feature type="region of interest" description="Docks into pockets in the proteasome alpha-ring to cause gate opening" evidence="1">
    <location>
        <begin position="404"/>
        <end position="406"/>
    </location>
</feature>
<feature type="coiled-coil region" evidence="1">
    <location>
        <begin position="12"/>
        <end position="70"/>
    </location>
</feature>
<feature type="compositionally biased region" description="Acidic residues" evidence="2">
    <location>
        <begin position="1"/>
        <end position="12"/>
    </location>
</feature>
<feature type="binding site" evidence="1">
    <location>
        <begin position="192"/>
        <end position="197"/>
    </location>
    <ligand>
        <name>ATP</name>
        <dbReference type="ChEBI" id="CHEBI:30616"/>
    </ligand>
</feature>
<feature type="binding site" evidence="1">
    <location>
        <position position="331"/>
    </location>
    <ligand>
        <name>ATP</name>
        <dbReference type="ChEBI" id="CHEBI:30616"/>
    </ligand>
</feature>
<protein>
    <recommendedName>
        <fullName evidence="1">Proteasome-activating nucleotidase 1</fullName>
        <shortName evidence="1">PAN 1</shortName>
    </recommendedName>
    <alternativeName>
        <fullName evidence="1">Proteasomal ATPase 1</fullName>
    </alternativeName>
    <alternativeName>
        <fullName evidence="1">Proteasome regulatory ATPase 1</fullName>
    </alternativeName>
    <alternativeName>
        <fullName evidence="1">Proteasome regulatory particle 1</fullName>
    </alternativeName>
</protein>